<evidence type="ECO:0000250" key="1">
    <source>
        <dbReference type="UniProtKB" id="P29326"/>
    </source>
</evidence>
<evidence type="ECO:0000250" key="2">
    <source>
        <dbReference type="UniProtKB" id="P33426"/>
    </source>
</evidence>
<evidence type="ECO:0000250" key="3">
    <source>
        <dbReference type="UniProtKB" id="Q68985"/>
    </source>
</evidence>
<evidence type="ECO:0000250" key="4">
    <source>
        <dbReference type="UniProtKB" id="Q81871"/>
    </source>
</evidence>
<evidence type="ECO:0000305" key="5"/>
<proteinExistence type="evidence at protein level"/>
<name>CAPSD_HEVRH</name>
<protein>
    <recommendedName>
        <fullName>Caspid protein</fullName>
    </recommendedName>
</protein>
<reference key="1">
    <citation type="journal article" date="1992" name="Microbiol. Immunol.">
        <title>Hepatitis E virus: cDNA cloning and expression.</title>
        <authorList>
            <person name="Uchida T."/>
            <person name="Suzuki K."/>
            <person name="Hayashi N."/>
            <person name="Iida F."/>
            <person name="Hara T."/>
            <person name="Oo S.S."/>
            <person name="Wang C.-K."/>
            <person name="Shikata T."/>
            <person name="Ichikawa M."/>
            <person name="Rikihisa T."/>
            <person name="Mizuno K."/>
            <person name="Win K.M."/>
        </authorList>
    </citation>
    <scope>NUCLEOTIDE SEQUENCE [GENOMIC RNA]</scope>
</reference>
<reference key="2">
    <citation type="journal article" date="1999" name="J. Gen. Virol.">
        <title>Only the non-glycosylated fraction of hepatitis E virus capsid (open reading frame 2) protein is stable in mammalian cells.</title>
        <authorList>
            <person name="Torresi J."/>
            <person name="Li F."/>
            <person name="Locarnini S.A."/>
            <person name="Anderson D.A."/>
        </authorList>
    </citation>
    <scope>CHARACTERIZATION</scope>
</reference>
<accession>Q00270</accession>
<keyword id="KW-0167">Capsid protein</keyword>
<keyword id="KW-0325">Glycoprotein</keyword>
<keyword id="KW-1035">Host cytoplasm</keyword>
<keyword id="KW-1038">Host endoplasmic reticulum</keyword>
<keyword id="KW-1040">Host Golgi apparatus</keyword>
<keyword id="KW-1048">Host nucleus</keyword>
<keyword id="KW-0694">RNA-binding</keyword>
<keyword id="KW-0946">Virion</keyword>
<sequence length="485" mass="52318">RRQYNLSTSPLTSSVATGTNLVLYAAPLSPLLPLQDGTNTHIMATEASNYAQYRVVRATIRYRPLVPNAVGGYAISISFWPQTTTTPTSVDMNSITSTDVRILVQPGIASELVIPSERLHYRNQGWRSVETSGVAEEEATSGLVMLCIHGSPVNSYTNTPYTGALGLLDFALELEFRNLTPGNTNTRVSRYSSTARHRLRRGADGTAELTTTAATRFMKDLYFTSTNGVGEIGRGIALTLFNLADTLLGGLPTELISSAGGQLFYSRPVVSAHGEPTVKLYTSVENAQQDKGIAIPHDIDLGESRVVIQDYDNQHEQDRPTPSPAPSRPFSVLRANDVLWLSLTAAEYDQSTYGSSTAPVYVSDSVTLVNVATGAQAVARSLDWTKVTLDGRPLSTIQQYPKTFFVLPLRGKLSFWEAGTTKAGYPYNYNTTASDQLLVENAAGHRVAISTYTTSLGAGPVSISAVAVLAPHSALALLEDTLDYP</sequence>
<dbReference type="EMBL" id="D90274">
    <property type="protein sequence ID" value="BAA20910.1"/>
    <property type="molecule type" value="Genomic_RNA"/>
</dbReference>
<dbReference type="SMR" id="Q00270"/>
<dbReference type="GO" id="GO:0044165">
    <property type="term" value="C:host cell endoplasmic reticulum"/>
    <property type="evidence" value="ECO:0007669"/>
    <property type="project" value="UniProtKB-SubCell"/>
</dbReference>
<dbReference type="GO" id="GO:0044177">
    <property type="term" value="C:host cell Golgi apparatus"/>
    <property type="evidence" value="ECO:0007669"/>
    <property type="project" value="UniProtKB-SubCell"/>
</dbReference>
<dbReference type="GO" id="GO:0042025">
    <property type="term" value="C:host cell nucleus"/>
    <property type="evidence" value="ECO:0007669"/>
    <property type="project" value="UniProtKB-SubCell"/>
</dbReference>
<dbReference type="GO" id="GO:0044228">
    <property type="term" value="C:host cell surface"/>
    <property type="evidence" value="ECO:0007669"/>
    <property type="project" value="UniProtKB-SubCell"/>
</dbReference>
<dbReference type="GO" id="GO:0019028">
    <property type="term" value="C:viral capsid"/>
    <property type="evidence" value="ECO:0007669"/>
    <property type="project" value="UniProtKB-KW"/>
</dbReference>
<dbReference type="GO" id="GO:0003723">
    <property type="term" value="F:RNA binding"/>
    <property type="evidence" value="ECO:0007669"/>
    <property type="project" value="UniProtKB-KW"/>
</dbReference>
<dbReference type="GO" id="GO:0005198">
    <property type="term" value="F:structural molecule activity"/>
    <property type="evidence" value="ECO:0007669"/>
    <property type="project" value="InterPro"/>
</dbReference>
<dbReference type="FunFam" id="2.40.30.190:FF:000001">
    <property type="entry name" value="Secreted protein ORF2"/>
    <property type="match status" value="1"/>
</dbReference>
<dbReference type="Gene3D" id="2.40.30.190">
    <property type="match status" value="1"/>
</dbReference>
<dbReference type="Gene3D" id="2.60.120.20">
    <property type="match status" value="1"/>
</dbReference>
<dbReference type="InterPro" id="IPR048794">
    <property type="entry name" value="SP2_C"/>
</dbReference>
<dbReference type="InterPro" id="IPR048802">
    <property type="entry name" value="SP2_M"/>
</dbReference>
<dbReference type="InterPro" id="IPR004261">
    <property type="entry name" value="SP2_N"/>
</dbReference>
<dbReference type="InterPro" id="IPR029053">
    <property type="entry name" value="Viral_coat"/>
</dbReference>
<dbReference type="Pfam" id="PF03014">
    <property type="entry name" value="SP2"/>
    <property type="match status" value="1"/>
</dbReference>
<dbReference type="Pfam" id="PF20752">
    <property type="entry name" value="SP2_C"/>
    <property type="match status" value="1"/>
</dbReference>
<dbReference type="Pfam" id="PF20751">
    <property type="entry name" value="SP2_M"/>
    <property type="match status" value="1"/>
</dbReference>
<dbReference type="SUPFAM" id="SSF88633">
    <property type="entry name" value="Positive stranded ssRNA viruses"/>
    <property type="match status" value="1"/>
</dbReference>
<organism>
    <name type="scientific">Hepatitis E virus (isolate Rhesus/HT-4)</name>
    <name type="common">HEV</name>
    <dbReference type="NCBI Taxonomy" id="31766"/>
    <lineage>
        <taxon>Viruses</taxon>
        <taxon>Riboviria</taxon>
        <taxon>Orthornavirae</taxon>
        <taxon>Kitrinoviricota</taxon>
        <taxon>Alsuviricetes</taxon>
        <taxon>Hepelivirales</taxon>
        <taxon>Hepeviridae</taxon>
        <taxon>Orthohepevirinae</taxon>
        <taxon>Paslahepevirus</taxon>
        <taxon>Hepatitis E virus</taxon>
    </lineage>
</organism>
<comment type="function">
    <text evidence="1 2 4">Forms an icosahedral capsid with a T=1 symmetry and a 34 nm diameter. The capsid is composed of 60 copies linked to each other. Binds to the 5' end of the genomic RNA to mediate genome encapsidation (By similarity). Binds to heparin surface proteoglycans (HSPGs) to mediate viral entry. Additionally, the interactions with host ASGR1 and ASGR2 facilitate viral infection of hepatocytes (By similarity). Inhibits IFN production by blocking host TBK1-induced IRF3 phosphorylation (By similarity). The nuclear form probably modulates host gene expression (By similarity).</text>
</comment>
<comment type="subunit">
    <text evidence="3 4">Self-assembles to form the capsid. The capsid is dominated by dimers that define the 30 morphological units. Interacts with phosphorylated protein ORF3 (By similarity). Interacts with host TMEM134. Interacts with host ASGR1 and ASGR2; these interactions facilitate infection of host hepatocytes (By similarity).</text>
</comment>
<comment type="subcellular location">
    <subcellularLocation>
        <location evidence="4">Virion</location>
    </subcellularLocation>
    <subcellularLocation>
        <location evidence="4">Host cytoplasm</location>
    </subcellularLocation>
    <subcellularLocation>
        <location evidence="4">Host endoplasmic reticulum</location>
    </subcellularLocation>
    <subcellularLocation>
        <location evidence="4">Host Golgi apparatus</location>
    </subcellularLocation>
    <subcellularLocation>
        <location evidence="3">Host cell surface</location>
    </subcellularLocation>
    <subcellularLocation>
        <location evidence="4">Host nucleus</location>
    </subcellularLocation>
    <text evidence="2 4">Shuttles between cytoplasm and nucleus (By similarity). Found in quasi-enveloped virions (By similarity).</text>
</comment>
<comment type="domain">
    <text evidence="2">The Arginine-Rich Motif (ARM) acts as a nuclear localization signal that drives the nuclear translocation of isoform capsid protein. This motif has also been linked to the inhibition of host IRF3 phosphorylation.</text>
</comment>
<comment type="PTM">
    <text evidence="4">Not N-glycosylated.</text>
</comment>
<comment type="miscellaneous">
    <text evidence="4">The viral particles present in feces and bile are non-enveloped, while those in circulating blood and culture supernatants are covered with a cellular membrane (quasi-enveloped).</text>
</comment>
<comment type="similarity">
    <text evidence="5">Belongs to the hepevirus capsid protein family.</text>
</comment>
<feature type="chain" id="PRO_0000100140" description="Caspid protein">
    <location>
        <begin position="1" status="less than"/>
        <end position="485" status="greater than"/>
    </location>
</feature>
<feature type="region of interest" description="particle formation" evidence="1">
    <location>
        <begin position="236"/>
        <end position="262"/>
    </location>
</feature>
<feature type="region of interest" description="Oligomerization" evidence="1">
    <location>
        <begin position="453"/>
        <end position="478"/>
    </location>
</feature>
<feature type="site" description="Possible proteolytic cleavage" evidence="4">
    <location>
        <begin position="446"/>
        <end position="447"/>
    </location>
</feature>
<feature type="site" description="Cleavage" evidence="4">
    <location>
        <begin position="469"/>
        <end position="470"/>
    </location>
</feature>
<feature type="glycosylation site" description="N-linked (GlcNAc...) asparagine; by host" evidence="3">
    <location>
        <position position="5"/>
    </location>
</feature>
<feature type="glycosylation site" description="N-linked (GlcNAc...) asparagine; by host" evidence="3">
    <location>
        <position position="178"/>
    </location>
</feature>
<feature type="glycosylation site" description="N-linked (GlcNAc...) asparagine; by host" evidence="3">
    <location>
        <position position="430"/>
    </location>
</feature>
<feature type="non-terminal residue">
    <location>
        <position position="1"/>
    </location>
</feature>
<feature type="non-terminal residue">
    <location>
        <position position="485"/>
    </location>
</feature>
<organismHost>
    <name type="scientific">Callithrix</name>
    <dbReference type="NCBI Taxonomy" id="9481"/>
</organismHost>
<organismHost>
    <name type="scientific">Cercopithecus hamlyni</name>
    <name type="common">Owl-faced monkey</name>
    <name type="synonym">Hamlyn's monkey</name>
    <dbReference type="NCBI Taxonomy" id="9536"/>
</organismHost>
<organismHost>
    <name type="scientific">Chlorocebus aethiops</name>
    <name type="common">Green monkey</name>
    <name type="synonym">Cercopithecus aethiops</name>
    <dbReference type="NCBI Taxonomy" id="9534"/>
</organismHost>
<organismHost>
    <name type="scientific">Gallus gallus</name>
    <name type="common">Chicken</name>
    <dbReference type="NCBI Taxonomy" id="9031"/>
</organismHost>
<organismHost>
    <name type="scientific">Homo sapiens</name>
    <name type="common">Human</name>
    <dbReference type="NCBI Taxonomy" id="9606"/>
</organismHost>
<organismHost>
    <name type="scientific">Macaca</name>
    <name type="common">macaques</name>
    <dbReference type="NCBI Taxonomy" id="9539"/>
</organismHost>
<organismHost>
    <name type="scientific">Mus musculus</name>
    <name type="common">Mouse</name>
    <dbReference type="NCBI Taxonomy" id="10090"/>
</organismHost>
<organismHost>
    <name type="scientific">Pan troglodytes</name>
    <name type="common">Chimpanzee</name>
    <dbReference type="NCBI Taxonomy" id="9598"/>
</organismHost>
<organismHost>
    <name type="scientific">Saimiri</name>
    <name type="common">squirrel monkeys</name>
    <dbReference type="NCBI Taxonomy" id="9520"/>
</organismHost>
<organismHost>
    <name type="scientific">Sus scrofa</name>
    <name type="common">Pig</name>
    <dbReference type="NCBI Taxonomy" id="9823"/>
</organismHost>
<gene>
    <name type="ORF">ORF2</name>
</gene>